<accession>B1Y9T4</accession>
<proteinExistence type="inferred from homology"/>
<feature type="chain" id="PRO_1000140080" description="CCA-adding enzyme">
    <location>
        <begin position="1"/>
        <end position="415"/>
    </location>
</feature>
<feature type="binding site" evidence="1">
    <location>
        <position position="52"/>
    </location>
    <ligand>
        <name>ATP</name>
        <dbReference type="ChEBI" id="CHEBI:30616"/>
    </ligand>
</feature>
<feature type="binding site" evidence="1">
    <location>
        <position position="52"/>
    </location>
    <ligand>
        <name>CTP</name>
        <dbReference type="ChEBI" id="CHEBI:37563"/>
    </ligand>
</feature>
<feature type="binding site" evidence="1">
    <location>
        <position position="55"/>
    </location>
    <ligand>
        <name>ATP</name>
        <dbReference type="ChEBI" id="CHEBI:30616"/>
    </ligand>
</feature>
<feature type="binding site" evidence="1">
    <location>
        <position position="55"/>
    </location>
    <ligand>
        <name>CTP</name>
        <dbReference type="ChEBI" id="CHEBI:37563"/>
    </ligand>
</feature>
<feature type="binding site" evidence="1">
    <location>
        <position position="64"/>
    </location>
    <ligand>
        <name>Mg(2+)</name>
        <dbReference type="ChEBI" id="CHEBI:18420"/>
    </ligand>
</feature>
<feature type="binding site" evidence="1">
    <location>
        <position position="66"/>
    </location>
    <ligand>
        <name>Mg(2+)</name>
        <dbReference type="ChEBI" id="CHEBI:18420"/>
    </ligand>
</feature>
<feature type="binding site" evidence="1">
    <location>
        <position position="116"/>
    </location>
    <ligand>
        <name>Mg(2+)</name>
        <dbReference type="ChEBI" id="CHEBI:18420"/>
    </ligand>
</feature>
<feature type="binding site" evidence="1">
    <location>
        <position position="139"/>
    </location>
    <ligand>
        <name>ATP</name>
        <dbReference type="ChEBI" id="CHEBI:30616"/>
    </ligand>
</feature>
<feature type="binding site" evidence="1">
    <location>
        <position position="139"/>
    </location>
    <ligand>
        <name>CTP</name>
        <dbReference type="ChEBI" id="CHEBI:37563"/>
    </ligand>
</feature>
<feature type="binding site" evidence="1">
    <location>
        <position position="159"/>
    </location>
    <ligand>
        <name>ATP</name>
        <dbReference type="ChEBI" id="CHEBI:30616"/>
    </ligand>
</feature>
<feature type="binding site" evidence="1">
    <location>
        <position position="159"/>
    </location>
    <ligand>
        <name>CTP</name>
        <dbReference type="ChEBI" id="CHEBI:37563"/>
    </ligand>
</feature>
<feature type="binding site" evidence="1">
    <location>
        <position position="168"/>
    </location>
    <ligand>
        <name>ATP</name>
        <dbReference type="ChEBI" id="CHEBI:30616"/>
    </ligand>
</feature>
<feature type="binding site" evidence="1">
    <location>
        <position position="168"/>
    </location>
    <ligand>
        <name>CTP</name>
        <dbReference type="ChEBI" id="CHEBI:37563"/>
    </ligand>
</feature>
<reference key="1">
    <citation type="submission" date="2008-03" db="EMBL/GenBank/DDBJ databases">
        <title>Complete sequence of Thermoproteus neutrophilus V24Sta.</title>
        <authorList>
            <consortium name="US DOE Joint Genome Institute"/>
            <person name="Copeland A."/>
            <person name="Lucas S."/>
            <person name="Lapidus A."/>
            <person name="Glavina del Rio T."/>
            <person name="Dalin E."/>
            <person name="Tice H."/>
            <person name="Bruce D."/>
            <person name="Goodwin L."/>
            <person name="Pitluck S."/>
            <person name="Sims D."/>
            <person name="Brettin T."/>
            <person name="Detter J.C."/>
            <person name="Han C."/>
            <person name="Kuske C.R."/>
            <person name="Schmutz J."/>
            <person name="Larimer F."/>
            <person name="Land M."/>
            <person name="Hauser L."/>
            <person name="Kyrpides N."/>
            <person name="Mikhailova N."/>
            <person name="Biddle J.F."/>
            <person name="Zhang Z."/>
            <person name="Fitz-Gibbon S.T."/>
            <person name="Lowe T.M."/>
            <person name="Saltikov C."/>
            <person name="House C.H."/>
            <person name="Richardson P."/>
        </authorList>
    </citation>
    <scope>NUCLEOTIDE SEQUENCE [LARGE SCALE GENOMIC DNA]</scope>
    <source>
        <strain>DSM 2338 / JCM 9278 / NBRC 100436 / V24Sta</strain>
    </source>
</reference>
<sequence length="415" mass="46967">MSEVEEVLKEAYKLVTPTPEEERKVAEVGSRVRQWVSEALAGVAAEVDMYGSSARSTWLPGQRDIDIFVVLRDRSIKPEDVVQTLSRYFDGVGVPWSLRYAQHPYLSLYVEGYEVDVVPCYKIAPGERPITAADRSPLHHKFLSERLSEDQRRDVRLLKLFLKSIGVYGAEIKVEGFSGYLTELLVAYYGSFVDVLKAASGWRPYRTYISFTESKTKFKAPLVVVDPVDPNRNVAAAVSLTSMSTFVLASRRFLKKPSLSYFSPPEAPALGVNAVEVVFPYPGESPDVVWGRYKRLGKSLYKHLRECGFKIYRWGVESDEKTYVSIIYVVEDVELPPYVLHRGPPVYDNAIDAFVEKYLREEVVGPFVLGTRAYVIKRRRYTNIGDCIRAKLGGGYAIRINQYGGGLVRKTPWLT</sequence>
<evidence type="ECO:0000255" key="1">
    <source>
        <dbReference type="HAMAP-Rule" id="MF_01264"/>
    </source>
</evidence>
<dbReference type="EC" id="2.7.7.72" evidence="1"/>
<dbReference type="EMBL" id="CP001014">
    <property type="protein sequence ID" value="ACB40484.1"/>
    <property type="molecule type" value="Genomic_DNA"/>
</dbReference>
<dbReference type="RefSeq" id="WP_012350903.1">
    <property type="nucleotide sequence ID" value="NC_010525.1"/>
</dbReference>
<dbReference type="SMR" id="B1Y9T4"/>
<dbReference type="STRING" id="444157.Tneu_1560"/>
<dbReference type="GeneID" id="6165372"/>
<dbReference type="KEGG" id="tne:Tneu_1560"/>
<dbReference type="eggNOG" id="arCOG04249">
    <property type="taxonomic scope" value="Archaea"/>
</dbReference>
<dbReference type="HOGENOM" id="CLU_044679_1_0_2"/>
<dbReference type="OrthoDB" id="7378at2157"/>
<dbReference type="Proteomes" id="UP000001694">
    <property type="component" value="Chromosome"/>
</dbReference>
<dbReference type="GO" id="GO:0005524">
    <property type="term" value="F:ATP binding"/>
    <property type="evidence" value="ECO:0007669"/>
    <property type="project" value="UniProtKB-UniRule"/>
</dbReference>
<dbReference type="GO" id="GO:0004810">
    <property type="term" value="F:CCA tRNA nucleotidyltransferase activity"/>
    <property type="evidence" value="ECO:0007669"/>
    <property type="project" value="UniProtKB-UniRule"/>
</dbReference>
<dbReference type="GO" id="GO:0000287">
    <property type="term" value="F:magnesium ion binding"/>
    <property type="evidence" value="ECO:0007669"/>
    <property type="project" value="UniProtKB-UniRule"/>
</dbReference>
<dbReference type="GO" id="GO:0000049">
    <property type="term" value="F:tRNA binding"/>
    <property type="evidence" value="ECO:0007669"/>
    <property type="project" value="UniProtKB-UniRule"/>
</dbReference>
<dbReference type="GO" id="GO:0042245">
    <property type="term" value="P:RNA repair"/>
    <property type="evidence" value="ECO:0007669"/>
    <property type="project" value="UniProtKB-KW"/>
</dbReference>
<dbReference type="GO" id="GO:0001680">
    <property type="term" value="P:tRNA 3'-terminal CCA addition"/>
    <property type="evidence" value="ECO:0007669"/>
    <property type="project" value="UniProtKB-UniRule"/>
</dbReference>
<dbReference type="CDD" id="cd05400">
    <property type="entry name" value="NT_2-5OAS_ClassI-CCAase"/>
    <property type="match status" value="1"/>
</dbReference>
<dbReference type="Gene3D" id="3.30.460.10">
    <property type="entry name" value="Beta Polymerase, domain 2"/>
    <property type="match status" value="1"/>
</dbReference>
<dbReference type="Gene3D" id="1.10.1410.30">
    <property type="entry name" value="CCA tRNA nucleotidyltransferase, domain 2"/>
    <property type="match status" value="1"/>
</dbReference>
<dbReference type="Gene3D" id="3.30.70.590">
    <property type="entry name" value="Poly(A) polymerase predicted RNA binding domain"/>
    <property type="match status" value="1"/>
</dbReference>
<dbReference type="HAMAP" id="MF_01264">
    <property type="entry name" value="CCA_arch"/>
    <property type="match status" value="1"/>
</dbReference>
<dbReference type="InterPro" id="IPR048833">
    <property type="entry name" value="CAA_C"/>
</dbReference>
<dbReference type="InterPro" id="IPR008229">
    <property type="entry name" value="CCA-adding_arc"/>
</dbReference>
<dbReference type="InterPro" id="IPR042090">
    <property type="entry name" value="CCA_tRNA_nucleotrans_2"/>
</dbReference>
<dbReference type="InterPro" id="IPR006116">
    <property type="entry name" value="NT_2-5OAS_ClassI-CCAase"/>
</dbReference>
<dbReference type="InterPro" id="IPR043519">
    <property type="entry name" value="NT_sf"/>
</dbReference>
<dbReference type="InterPro" id="IPR011068">
    <property type="entry name" value="NuclTrfase_I-like_C"/>
</dbReference>
<dbReference type="InterPro" id="IPR002934">
    <property type="entry name" value="Polymerase_NTP_transf_dom"/>
</dbReference>
<dbReference type="InterPro" id="IPR015329">
    <property type="entry name" value="tRNA_NucTransf2"/>
</dbReference>
<dbReference type="NCBIfam" id="TIGR03671">
    <property type="entry name" value="cca_archaeal"/>
    <property type="match status" value="1"/>
</dbReference>
<dbReference type="PANTHER" id="PTHR39643">
    <property type="entry name" value="CCA-ADDING ENZYME"/>
    <property type="match status" value="1"/>
</dbReference>
<dbReference type="PANTHER" id="PTHR39643:SF1">
    <property type="entry name" value="CCA-ADDING ENZYME"/>
    <property type="match status" value="1"/>
</dbReference>
<dbReference type="Pfam" id="PF21133">
    <property type="entry name" value="CAA_C"/>
    <property type="match status" value="1"/>
</dbReference>
<dbReference type="Pfam" id="PF01909">
    <property type="entry name" value="NTP_transf_2"/>
    <property type="match status" value="1"/>
</dbReference>
<dbReference type="Pfam" id="PF09249">
    <property type="entry name" value="tRNA_NucTransf2"/>
    <property type="match status" value="1"/>
</dbReference>
<dbReference type="PIRSF" id="PIRSF005335">
    <property type="entry name" value="CCA_arch"/>
    <property type="match status" value="1"/>
</dbReference>
<dbReference type="SUPFAM" id="SSF81301">
    <property type="entry name" value="Nucleotidyltransferase"/>
    <property type="match status" value="1"/>
</dbReference>
<dbReference type="SUPFAM" id="SSF55003">
    <property type="entry name" value="PAP/Archaeal CCA-adding enzyme, C-terminal domain"/>
    <property type="match status" value="1"/>
</dbReference>
<dbReference type="SUPFAM" id="SSF81631">
    <property type="entry name" value="PAP/OAS1 substrate-binding domain"/>
    <property type="match status" value="1"/>
</dbReference>
<organism>
    <name type="scientific">Pyrobaculum neutrophilum (strain DSM 2338 / JCM 9278 / NBRC 100436 / V24Sta)</name>
    <name type="common">Thermoproteus neutrophilus</name>
    <dbReference type="NCBI Taxonomy" id="444157"/>
    <lineage>
        <taxon>Archaea</taxon>
        <taxon>Thermoproteota</taxon>
        <taxon>Thermoprotei</taxon>
        <taxon>Thermoproteales</taxon>
        <taxon>Thermoproteaceae</taxon>
        <taxon>Pyrobaculum</taxon>
    </lineage>
</organism>
<protein>
    <recommendedName>
        <fullName evidence="1">CCA-adding enzyme</fullName>
        <ecNumber evidence="1">2.7.7.72</ecNumber>
    </recommendedName>
    <alternativeName>
        <fullName evidence="1">CCA tRNA nucleotidyltransferase</fullName>
    </alternativeName>
    <alternativeName>
        <fullName evidence="1">tRNA CCA-pyrophosphorylase</fullName>
    </alternativeName>
    <alternativeName>
        <fullName evidence="1">tRNA adenylyl-/cytidylyl- transferase</fullName>
    </alternativeName>
    <alternativeName>
        <fullName evidence="1">tRNA nucleotidyltransferase</fullName>
    </alternativeName>
    <alternativeName>
        <fullName evidence="1">tRNA-NT</fullName>
    </alternativeName>
</protein>
<gene>
    <name evidence="1" type="primary">cca</name>
    <name type="ordered locus">Tneu_1560</name>
</gene>
<name>CCA_PYRNV</name>
<comment type="function">
    <text evidence="1">Catalyzes the addition and repair of the essential 3'-terminal CCA sequence in tRNAs without using a nucleic acid template. Adds these three nucleotides in the order of C, C, and A to the tRNA nucleotide-73, using CTP and ATP as substrates and producing inorganic pyrophosphate. tRNA 3'-terminal CCA addition is required both for tRNA processing and repair. Also involved in tRNA surveillance by mediating tandem CCA addition to generate a CCACCA at the 3' terminus of unstable tRNAs. While stable tRNAs receive only 3'-terminal CCA, unstable tRNAs are marked with CCACCA and rapidly degraded.</text>
</comment>
<comment type="catalytic activity">
    <reaction evidence="1">
        <text>a tRNA precursor + 2 CTP + ATP = a tRNA with a 3' CCA end + 3 diphosphate</text>
        <dbReference type="Rhea" id="RHEA:14433"/>
        <dbReference type="Rhea" id="RHEA-COMP:10465"/>
        <dbReference type="Rhea" id="RHEA-COMP:10468"/>
        <dbReference type="ChEBI" id="CHEBI:30616"/>
        <dbReference type="ChEBI" id="CHEBI:33019"/>
        <dbReference type="ChEBI" id="CHEBI:37563"/>
        <dbReference type="ChEBI" id="CHEBI:74896"/>
        <dbReference type="ChEBI" id="CHEBI:83071"/>
        <dbReference type="EC" id="2.7.7.72"/>
    </reaction>
</comment>
<comment type="catalytic activity">
    <reaction evidence="1">
        <text>a tRNA with a 3' CCA end + 2 CTP + ATP = a tRNA with a 3' CCACCA end + 3 diphosphate</text>
        <dbReference type="Rhea" id="RHEA:76235"/>
        <dbReference type="Rhea" id="RHEA-COMP:10468"/>
        <dbReference type="Rhea" id="RHEA-COMP:18655"/>
        <dbReference type="ChEBI" id="CHEBI:30616"/>
        <dbReference type="ChEBI" id="CHEBI:33019"/>
        <dbReference type="ChEBI" id="CHEBI:37563"/>
        <dbReference type="ChEBI" id="CHEBI:83071"/>
        <dbReference type="ChEBI" id="CHEBI:195187"/>
    </reaction>
    <physiologicalReaction direction="left-to-right" evidence="1">
        <dbReference type="Rhea" id="RHEA:76236"/>
    </physiologicalReaction>
</comment>
<comment type="cofactor">
    <cofactor evidence="1">
        <name>Mg(2+)</name>
        <dbReference type="ChEBI" id="CHEBI:18420"/>
    </cofactor>
</comment>
<comment type="subunit">
    <text evidence="1">Homodimer.</text>
</comment>
<comment type="miscellaneous">
    <text evidence="1">A single active site specifically recognizes both ATP and CTP and is responsible for their addition.</text>
</comment>
<comment type="similarity">
    <text evidence="1">Belongs to the tRNA nucleotidyltransferase/poly(A) polymerase family. Archaeal CCA-adding enzyme subfamily.</text>
</comment>
<keyword id="KW-0067">ATP-binding</keyword>
<keyword id="KW-0460">Magnesium</keyword>
<keyword id="KW-0479">Metal-binding</keyword>
<keyword id="KW-0547">Nucleotide-binding</keyword>
<keyword id="KW-0548">Nucleotidyltransferase</keyword>
<keyword id="KW-0692">RNA repair</keyword>
<keyword id="KW-0694">RNA-binding</keyword>
<keyword id="KW-0808">Transferase</keyword>
<keyword id="KW-0819">tRNA processing</keyword>